<name>CH10_DESHD</name>
<gene>
    <name evidence="1" type="primary">groES</name>
    <name evidence="1" type="synonym">groS</name>
    <name type="ordered locus">Dhaf_1405</name>
</gene>
<organism>
    <name type="scientific">Desulfitobacterium hafniense (strain DSM 10664 / DCB-2)</name>
    <dbReference type="NCBI Taxonomy" id="272564"/>
    <lineage>
        <taxon>Bacteria</taxon>
        <taxon>Bacillati</taxon>
        <taxon>Bacillota</taxon>
        <taxon>Clostridia</taxon>
        <taxon>Eubacteriales</taxon>
        <taxon>Desulfitobacteriaceae</taxon>
        <taxon>Desulfitobacterium</taxon>
    </lineage>
</organism>
<proteinExistence type="inferred from homology"/>
<dbReference type="EMBL" id="CP001336">
    <property type="protein sequence ID" value="ACL19461.1"/>
    <property type="molecule type" value="Genomic_DNA"/>
</dbReference>
<dbReference type="RefSeq" id="WP_005817319.1">
    <property type="nucleotide sequence ID" value="NC_011830.1"/>
</dbReference>
<dbReference type="SMR" id="B8FNT6"/>
<dbReference type="KEGG" id="dhd:Dhaf_1405"/>
<dbReference type="HOGENOM" id="CLU_132825_2_0_9"/>
<dbReference type="Proteomes" id="UP000007726">
    <property type="component" value="Chromosome"/>
</dbReference>
<dbReference type="GO" id="GO:0005737">
    <property type="term" value="C:cytoplasm"/>
    <property type="evidence" value="ECO:0007669"/>
    <property type="project" value="UniProtKB-SubCell"/>
</dbReference>
<dbReference type="GO" id="GO:0005524">
    <property type="term" value="F:ATP binding"/>
    <property type="evidence" value="ECO:0007669"/>
    <property type="project" value="InterPro"/>
</dbReference>
<dbReference type="GO" id="GO:0046872">
    <property type="term" value="F:metal ion binding"/>
    <property type="evidence" value="ECO:0007669"/>
    <property type="project" value="TreeGrafter"/>
</dbReference>
<dbReference type="GO" id="GO:0044183">
    <property type="term" value="F:protein folding chaperone"/>
    <property type="evidence" value="ECO:0007669"/>
    <property type="project" value="InterPro"/>
</dbReference>
<dbReference type="GO" id="GO:0051087">
    <property type="term" value="F:protein-folding chaperone binding"/>
    <property type="evidence" value="ECO:0007669"/>
    <property type="project" value="TreeGrafter"/>
</dbReference>
<dbReference type="GO" id="GO:0051082">
    <property type="term" value="F:unfolded protein binding"/>
    <property type="evidence" value="ECO:0007669"/>
    <property type="project" value="TreeGrafter"/>
</dbReference>
<dbReference type="GO" id="GO:0051085">
    <property type="term" value="P:chaperone cofactor-dependent protein refolding"/>
    <property type="evidence" value="ECO:0007669"/>
    <property type="project" value="TreeGrafter"/>
</dbReference>
<dbReference type="CDD" id="cd00320">
    <property type="entry name" value="cpn10"/>
    <property type="match status" value="1"/>
</dbReference>
<dbReference type="FunFam" id="2.30.33.40:FF:000001">
    <property type="entry name" value="10 kDa chaperonin"/>
    <property type="match status" value="1"/>
</dbReference>
<dbReference type="Gene3D" id="2.30.33.40">
    <property type="entry name" value="GroES chaperonin"/>
    <property type="match status" value="1"/>
</dbReference>
<dbReference type="HAMAP" id="MF_00580">
    <property type="entry name" value="CH10"/>
    <property type="match status" value="1"/>
</dbReference>
<dbReference type="InterPro" id="IPR020818">
    <property type="entry name" value="Chaperonin_GroES"/>
</dbReference>
<dbReference type="InterPro" id="IPR037124">
    <property type="entry name" value="Chaperonin_GroES_sf"/>
</dbReference>
<dbReference type="InterPro" id="IPR018369">
    <property type="entry name" value="Chaprnonin_Cpn10_CS"/>
</dbReference>
<dbReference type="InterPro" id="IPR011032">
    <property type="entry name" value="GroES-like_sf"/>
</dbReference>
<dbReference type="NCBIfam" id="NF001527">
    <property type="entry name" value="PRK00364.1-2"/>
    <property type="match status" value="1"/>
</dbReference>
<dbReference type="NCBIfam" id="NF001530">
    <property type="entry name" value="PRK00364.1-6"/>
    <property type="match status" value="1"/>
</dbReference>
<dbReference type="NCBIfam" id="NF001531">
    <property type="entry name" value="PRK00364.2-2"/>
    <property type="match status" value="1"/>
</dbReference>
<dbReference type="NCBIfam" id="NF001533">
    <property type="entry name" value="PRK00364.2-4"/>
    <property type="match status" value="1"/>
</dbReference>
<dbReference type="NCBIfam" id="NF001534">
    <property type="entry name" value="PRK00364.2-5"/>
    <property type="match status" value="1"/>
</dbReference>
<dbReference type="PANTHER" id="PTHR10772">
    <property type="entry name" value="10 KDA HEAT SHOCK PROTEIN"/>
    <property type="match status" value="1"/>
</dbReference>
<dbReference type="PANTHER" id="PTHR10772:SF58">
    <property type="entry name" value="CO-CHAPERONIN GROES"/>
    <property type="match status" value="1"/>
</dbReference>
<dbReference type="Pfam" id="PF00166">
    <property type="entry name" value="Cpn10"/>
    <property type="match status" value="1"/>
</dbReference>
<dbReference type="PRINTS" id="PR00297">
    <property type="entry name" value="CHAPERONIN10"/>
</dbReference>
<dbReference type="SMART" id="SM00883">
    <property type="entry name" value="Cpn10"/>
    <property type="match status" value="1"/>
</dbReference>
<dbReference type="SUPFAM" id="SSF50129">
    <property type="entry name" value="GroES-like"/>
    <property type="match status" value="1"/>
</dbReference>
<dbReference type="PROSITE" id="PS00681">
    <property type="entry name" value="CHAPERONINS_CPN10"/>
    <property type="match status" value="1"/>
</dbReference>
<comment type="function">
    <text evidence="1">Together with the chaperonin GroEL, plays an essential role in assisting protein folding. The GroEL-GroES system forms a nano-cage that allows encapsulation of the non-native substrate proteins and provides a physical environment optimized to promote and accelerate protein folding. GroES binds to the apical surface of the GroEL ring, thereby capping the opening of the GroEL channel.</text>
</comment>
<comment type="subunit">
    <text evidence="1">Heptamer of 7 subunits arranged in a ring. Interacts with the chaperonin GroEL.</text>
</comment>
<comment type="subcellular location">
    <subcellularLocation>
        <location evidence="1">Cytoplasm</location>
    </subcellularLocation>
</comment>
<comment type="similarity">
    <text evidence="1">Belongs to the GroES chaperonin family.</text>
</comment>
<reference key="1">
    <citation type="journal article" date="2012" name="BMC Microbiol.">
        <title>Genome sequence of Desulfitobacterium hafniense DCB-2, a Gram-positive anaerobe capable of dehalogenation and metal reduction.</title>
        <authorList>
            <person name="Kim S.H."/>
            <person name="Harzman C."/>
            <person name="Davis J.K."/>
            <person name="Hutcheson R."/>
            <person name="Broderick J.B."/>
            <person name="Marsh T.L."/>
            <person name="Tiedje J.M."/>
        </authorList>
    </citation>
    <scope>NUCLEOTIDE SEQUENCE [LARGE SCALE GENOMIC DNA]</scope>
    <source>
        <strain>DSM 10664 / DCB-2</strain>
    </source>
</reference>
<protein>
    <recommendedName>
        <fullName evidence="1">Co-chaperonin GroES</fullName>
    </recommendedName>
    <alternativeName>
        <fullName evidence="1">10 kDa chaperonin</fullName>
    </alternativeName>
    <alternativeName>
        <fullName evidence="1">Chaperonin-10</fullName>
        <shortName evidence="1">Cpn10</shortName>
    </alternativeName>
</protein>
<sequence>MNIKPLGDRVVIKALPMEEKTKSGIIMPDTAKEKPQEGEVVAVGPGKMEKGERIVLDVKVGDRVIYSKYAGTEVKYDGQEYLILKETDILAVIG</sequence>
<evidence type="ECO:0000255" key="1">
    <source>
        <dbReference type="HAMAP-Rule" id="MF_00580"/>
    </source>
</evidence>
<accession>B8FNT6</accession>
<keyword id="KW-0143">Chaperone</keyword>
<keyword id="KW-0963">Cytoplasm</keyword>
<feature type="chain" id="PRO_1000146901" description="Co-chaperonin GroES">
    <location>
        <begin position="1"/>
        <end position="94"/>
    </location>
</feature>